<accession>Q0A8K3</accession>
<dbReference type="EMBL" id="CP000453">
    <property type="protein sequence ID" value="ABI56834.1"/>
    <property type="molecule type" value="Genomic_DNA"/>
</dbReference>
<dbReference type="RefSeq" id="WP_011629229.1">
    <property type="nucleotide sequence ID" value="NC_008340.1"/>
</dbReference>
<dbReference type="SMR" id="Q0A8K3"/>
<dbReference type="KEGG" id="aeh:Mlg_1485"/>
<dbReference type="eggNOG" id="COG0249">
    <property type="taxonomic scope" value="Bacteria"/>
</dbReference>
<dbReference type="HOGENOM" id="CLU_002472_4_0_6"/>
<dbReference type="OrthoDB" id="9802448at2"/>
<dbReference type="Proteomes" id="UP000001962">
    <property type="component" value="Chromosome"/>
</dbReference>
<dbReference type="GO" id="GO:0005829">
    <property type="term" value="C:cytosol"/>
    <property type="evidence" value="ECO:0007669"/>
    <property type="project" value="TreeGrafter"/>
</dbReference>
<dbReference type="GO" id="GO:0005524">
    <property type="term" value="F:ATP binding"/>
    <property type="evidence" value="ECO:0007669"/>
    <property type="project" value="UniProtKB-UniRule"/>
</dbReference>
<dbReference type="GO" id="GO:0140664">
    <property type="term" value="F:ATP-dependent DNA damage sensor activity"/>
    <property type="evidence" value="ECO:0007669"/>
    <property type="project" value="InterPro"/>
</dbReference>
<dbReference type="GO" id="GO:0003684">
    <property type="term" value="F:damaged DNA binding"/>
    <property type="evidence" value="ECO:0007669"/>
    <property type="project" value="UniProtKB-UniRule"/>
</dbReference>
<dbReference type="GO" id="GO:0030983">
    <property type="term" value="F:mismatched DNA binding"/>
    <property type="evidence" value="ECO:0007669"/>
    <property type="project" value="InterPro"/>
</dbReference>
<dbReference type="GO" id="GO:0006298">
    <property type="term" value="P:mismatch repair"/>
    <property type="evidence" value="ECO:0007669"/>
    <property type="project" value="UniProtKB-UniRule"/>
</dbReference>
<dbReference type="CDD" id="cd03284">
    <property type="entry name" value="ABC_MutS1"/>
    <property type="match status" value="1"/>
</dbReference>
<dbReference type="FunFam" id="1.10.1420.10:FF:000002">
    <property type="entry name" value="DNA mismatch repair protein MutS"/>
    <property type="match status" value="1"/>
</dbReference>
<dbReference type="FunFam" id="3.40.1170.10:FF:000001">
    <property type="entry name" value="DNA mismatch repair protein MutS"/>
    <property type="match status" value="1"/>
</dbReference>
<dbReference type="FunFam" id="3.40.50.300:FF:000283">
    <property type="entry name" value="DNA mismatch repair protein MutS"/>
    <property type="match status" value="1"/>
</dbReference>
<dbReference type="Gene3D" id="1.10.1420.10">
    <property type="match status" value="2"/>
</dbReference>
<dbReference type="Gene3D" id="6.10.140.430">
    <property type="match status" value="1"/>
</dbReference>
<dbReference type="Gene3D" id="3.40.1170.10">
    <property type="entry name" value="DNA repair protein MutS, domain I"/>
    <property type="match status" value="1"/>
</dbReference>
<dbReference type="Gene3D" id="3.30.420.110">
    <property type="entry name" value="MutS, connector domain"/>
    <property type="match status" value="1"/>
</dbReference>
<dbReference type="Gene3D" id="3.40.50.300">
    <property type="entry name" value="P-loop containing nucleotide triphosphate hydrolases"/>
    <property type="match status" value="1"/>
</dbReference>
<dbReference type="HAMAP" id="MF_00096">
    <property type="entry name" value="MutS"/>
    <property type="match status" value="1"/>
</dbReference>
<dbReference type="InterPro" id="IPR005748">
    <property type="entry name" value="DNA_mismatch_repair_MutS"/>
</dbReference>
<dbReference type="InterPro" id="IPR007695">
    <property type="entry name" value="DNA_mismatch_repair_MutS-lik_N"/>
</dbReference>
<dbReference type="InterPro" id="IPR017261">
    <property type="entry name" value="DNA_mismatch_repair_MutS/MSH"/>
</dbReference>
<dbReference type="InterPro" id="IPR000432">
    <property type="entry name" value="DNA_mismatch_repair_MutS_C"/>
</dbReference>
<dbReference type="InterPro" id="IPR007861">
    <property type="entry name" value="DNA_mismatch_repair_MutS_clamp"/>
</dbReference>
<dbReference type="InterPro" id="IPR007696">
    <property type="entry name" value="DNA_mismatch_repair_MutS_core"/>
</dbReference>
<dbReference type="InterPro" id="IPR016151">
    <property type="entry name" value="DNA_mismatch_repair_MutS_N"/>
</dbReference>
<dbReference type="InterPro" id="IPR036187">
    <property type="entry name" value="DNA_mismatch_repair_MutS_sf"/>
</dbReference>
<dbReference type="InterPro" id="IPR007860">
    <property type="entry name" value="DNA_mmatch_repair_MutS_con_dom"/>
</dbReference>
<dbReference type="InterPro" id="IPR045076">
    <property type="entry name" value="MutS"/>
</dbReference>
<dbReference type="InterPro" id="IPR036678">
    <property type="entry name" value="MutS_con_dom_sf"/>
</dbReference>
<dbReference type="InterPro" id="IPR027417">
    <property type="entry name" value="P-loop_NTPase"/>
</dbReference>
<dbReference type="NCBIfam" id="TIGR01070">
    <property type="entry name" value="mutS1"/>
    <property type="match status" value="1"/>
</dbReference>
<dbReference type="NCBIfam" id="NF003810">
    <property type="entry name" value="PRK05399.1"/>
    <property type="match status" value="1"/>
</dbReference>
<dbReference type="PANTHER" id="PTHR11361:SF34">
    <property type="entry name" value="DNA MISMATCH REPAIR PROTEIN MSH1, MITOCHONDRIAL"/>
    <property type="match status" value="1"/>
</dbReference>
<dbReference type="PANTHER" id="PTHR11361">
    <property type="entry name" value="DNA MISMATCH REPAIR PROTEIN MUTS FAMILY MEMBER"/>
    <property type="match status" value="1"/>
</dbReference>
<dbReference type="Pfam" id="PF01624">
    <property type="entry name" value="MutS_I"/>
    <property type="match status" value="1"/>
</dbReference>
<dbReference type="Pfam" id="PF05188">
    <property type="entry name" value="MutS_II"/>
    <property type="match status" value="1"/>
</dbReference>
<dbReference type="Pfam" id="PF05192">
    <property type="entry name" value="MutS_III"/>
    <property type="match status" value="1"/>
</dbReference>
<dbReference type="Pfam" id="PF05190">
    <property type="entry name" value="MutS_IV"/>
    <property type="match status" value="1"/>
</dbReference>
<dbReference type="Pfam" id="PF00488">
    <property type="entry name" value="MutS_V"/>
    <property type="match status" value="1"/>
</dbReference>
<dbReference type="PIRSF" id="PIRSF037677">
    <property type="entry name" value="DNA_mis_repair_Msh6"/>
    <property type="match status" value="1"/>
</dbReference>
<dbReference type="SMART" id="SM00534">
    <property type="entry name" value="MUTSac"/>
    <property type="match status" value="1"/>
</dbReference>
<dbReference type="SMART" id="SM00533">
    <property type="entry name" value="MUTSd"/>
    <property type="match status" value="1"/>
</dbReference>
<dbReference type="SUPFAM" id="SSF55271">
    <property type="entry name" value="DNA repair protein MutS, domain I"/>
    <property type="match status" value="1"/>
</dbReference>
<dbReference type="SUPFAM" id="SSF53150">
    <property type="entry name" value="DNA repair protein MutS, domain II"/>
    <property type="match status" value="1"/>
</dbReference>
<dbReference type="SUPFAM" id="SSF48334">
    <property type="entry name" value="DNA repair protein MutS, domain III"/>
    <property type="match status" value="1"/>
</dbReference>
<dbReference type="SUPFAM" id="SSF52540">
    <property type="entry name" value="P-loop containing nucleoside triphosphate hydrolases"/>
    <property type="match status" value="1"/>
</dbReference>
<dbReference type="PROSITE" id="PS00486">
    <property type="entry name" value="DNA_MISMATCH_REPAIR_2"/>
    <property type="match status" value="1"/>
</dbReference>
<evidence type="ECO:0000255" key="1">
    <source>
        <dbReference type="HAMAP-Rule" id="MF_00096"/>
    </source>
</evidence>
<evidence type="ECO:0000256" key="2">
    <source>
        <dbReference type="SAM" id="MobiDB-lite"/>
    </source>
</evidence>
<proteinExistence type="inferred from homology"/>
<organism>
    <name type="scientific">Alkalilimnicola ehrlichii (strain ATCC BAA-1101 / DSM 17681 / MLHE-1)</name>
    <dbReference type="NCBI Taxonomy" id="187272"/>
    <lineage>
        <taxon>Bacteria</taxon>
        <taxon>Pseudomonadati</taxon>
        <taxon>Pseudomonadota</taxon>
        <taxon>Gammaproteobacteria</taxon>
        <taxon>Chromatiales</taxon>
        <taxon>Ectothiorhodospiraceae</taxon>
        <taxon>Alkalilimnicola</taxon>
    </lineage>
</organism>
<comment type="function">
    <text evidence="1">This protein is involved in the repair of mismatches in DNA. It is possible that it carries out the mismatch recognition step. This protein has a weak ATPase activity.</text>
</comment>
<comment type="similarity">
    <text evidence="1">Belongs to the DNA mismatch repair MutS family.</text>
</comment>
<reference key="1">
    <citation type="submission" date="2006-08" db="EMBL/GenBank/DDBJ databases">
        <title>Complete sequence of Alkalilimnicola ehrilichei MLHE-1.</title>
        <authorList>
            <person name="Copeland A."/>
            <person name="Lucas S."/>
            <person name="Lapidus A."/>
            <person name="Barry K."/>
            <person name="Detter J.C."/>
            <person name="Glavina del Rio T."/>
            <person name="Hammon N."/>
            <person name="Israni S."/>
            <person name="Dalin E."/>
            <person name="Tice H."/>
            <person name="Pitluck S."/>
            <person name="Sims D."/>
            <person name="Brettin T."/>
            <person name="Bruce D."/>
            <person name="Han C."/>
            <person name="Tapia R."/>
            <person name="Gilna P."/>
            <person name="Schmutz J."/>
            <person name="Larimer F."/>
            <person name="Land M."/>
            <person name="Hauser L."/>
            <person name="Kyrpides N."/>
            <person name="Mikhailova N."/>
            <person name="Oremland R.S."/>
            <person name="Hoeft S.E."/>
            <person name="Switzer-Blum J."/>
            <person name="Kulp T."/>
            <person name="King G."/>
            <person name="Tabita R."/>
            <person name="Witte B."/>
            <person name="Santini J.M."/>
            <person name="Basu P."/>
            <person name="Hollibaugh J.T."/>
            <person name="Xie G."/>
            <person name="Stolz J.F."/>
            <person name="Richardson P."/>
        </authorList>
    </citation>
    <scope>NUCLEOTIDE SEQUENCE [LARGE SCALE GENOMIC DNA]</scope>
    <source>
        <strain>ATCC BAA-1101 / DSM 17681 / MLHE-1</strain>
    </source>
</reference>
<keyword id="KW-0067">ATP-binding</keyword>
<keyword id="KW-0227">DNA damage</keyword>
<keyword id="KW-0234">DNA repair</keyword>
<keyword id="KW-0238">DNA-binding</keyword>
<keyword id="KW-0547">Nucleotide-binding</keyword>
<keyword id="KW-1185">Reference proteome</keyword>
<sequence length="878" mass="96082">MAQSSPKASSRHTPMMRQFLRIKAEHPDILLFYRMGDFYELFYEDAERAAKLLDITLTTRGQSAGEPIPMAGVPVHAVESYLARLVRQGESVAICEQIGDPDNSKGPVERQVVRIVTPGTLTDEALLEERQSNILAALSCHQSRWGLASLELSSGRFSLTEPADEQALAADLERLNPAELLVDEALTLPTGLAVGPGLTRRPPWHFELDTATDLLTEQFGTRDLAGFGAQDHSAGLAAAGALLQYVRETQRSALPHIRRLQVEHGDQAIVIDAASRRNLELERNLSGGTEHTLASVLDSTVNAMGSRLLRRWLNRPLRDRTTLQARHQAVEILMAESLTEALRRQLRGISDVERILARVALGSARPRDLTGLRETLARLPDIQATLTGAGAPRLVDLAAQCGEHPQTLDHLRRALVDQPPVVIRDGGVIAEGYDATLDELRTLSENADNYLLELEQRERERTGISTLKVGYNRVHGYYIEVTRAQADAVPAEYVRRQTLKGVERYILPELKAFEDKVLSAREKALAREKVLYEQLLASLASDLAPLQDTAAALAELDTLAAFAERAQALDYSRPELRDGAGLRIEAGRHPVVEYSLDGPFVPNDLTLDDRRRMLIITGPNMGGKSTYMRQVALITLMAHIGSFVPARAASLGPVDRIFTRIGASDDLAGGRSTFMVEMTETANILHNATAQSLVLMDEIGRGTSTFDGLALAWATAERLARDQRAYTLFATHYFEMTALPEQCPGASNVHLDAVEHGERIVFLHAVKPGPASQSYGLQVAALAGVPGPVLEAAREKLRALEEESSRQRAEPDQLSLFAEPAPPPPLPSAAEQALSEVDPDELSPRQALDLLYRLKALTSGEEGADKKARGDAVDARSR</sequence>
<name>MUTS_ALKEH</name>
<gene>
    <name evidence="1" type="primary">mutS</name>
    <name type="ordered locus">Mlg_1485</name>
</gene>
<feature type="chain" id="PRO_0000335108" description="DNA mismatch repair protein MutS">
    <location>
        <begin position="1"/>
        <end position="878"/>
    </location>
</feature>
<feature type="region of interest" description="Disordered" evidence="2">
    <location>
        <begin position="800"/>
        <end position="842"/>
    </location>
</feature>
<feature type="region of interest" description="Disordered" evidence="2">
    <location>
        <begin position="859"/>
        <end position="878"/>
    </location>
</feature>
<feature type="compositionally biased region" description="Basic and acidic residues" evidence="2">
    <location>
        <begin position="800"/>
        <end position="811"/>
    </location>
</feature>
<feature type="compositionally biased region" description="Basic and acidic residues" evidence="2">
    <location>
        <begin position="863"/>
        <end position="878"/>
    </location>
</feature>
<feature type="binding site" evidence="1">
    <location>
        <begin position="618"/>
        <end position="625"/>
    </location>
    <ligand>
        <name>ATP</name>
        <dbReference type="ChEBI" id="CHEBI:30616"/>
    </ligand>
</feature>
<protein>
    <recommendedName>
        <fullName evidence="1">DNA mismatch repair protein MutS</fullName>
    </recommendedName>
</protein>